<keyword id="KW-0378">Hydrolase</keyword>
<keyword id="KW-0442">Lipid degradation</keyword>
<keyword id="KW-0443">Lipid metabolism</keyword>
<keyword id="KW-0964">Secreted</keyword>
<keyword id="KW-0732">Signal</keyword>
<dbReference type="EC" id="3.1.1.75"/>
<dbReference type="EMBL" id="J04223">
    <property type="protein sequence ID" value="AAA21974.1"/>
    <property type="molecule type" value="Genomic_DNA"/>
</dbReference>
<dbReference type="PIR" id="A32235">
    <property type="entry name" value="A32235"/>
</dbReference>
<dbReference type="SMR" id="P12625"/>
<dbReference type="ESTHER" id="alcfa-phb">
    <property type="family name" value="Esterase_phb"/>
</dbReference>
<dbReference type="BRENDA" id="3.1.1.75">
    <property type="organism ID" value="5160"/>
</dbReference>
<dbReference type="SABIO-RK" id="P12625"/>
<dbReference type="GO" id="GO:0005576">
    <property type="term" value="C:extracellular region"/>
    <property type="evidence" value="ECO:0007669"/>
    <property type="project" value="UniProtKB-SubCell"/>
</dbReference>
<dbReference type="GO" id="GO:0050526">
    <property type="term" value="F:poly(3-hydroxybutyrate) depolymerase activity"/>
    <property type="evidence" value="ECO:0007669"/>
    <property type="project" value="UniProtKB-EC"/>
</dbReference>
<dbReference type="GO" id="GO:0016042">
    <property type="term" value="P:lipid catabolic process"/>
    <property type="evidence" value="ECO:0007669"/>
    <property type="project" value="UniProtKB-KW"/>
</dbReference>
<dbReference type="CDD" id="cd00063">
    <property type="entry name" value="FN3"/>
    <property type="match status" value="1"/>
</dbReference>
<dbReference type="Gene3D" id="3.40.50.1820">
    <property type="entry name" value="alpha/beta hydrolase"/>
    <property type="match status" value="1"/>
</dbReference>
<dbReference type="Gene3D" id="2.60.40.10">
    <property type="entry name" value="Immunoglobulins"/>
    <property type="match status" value="1"/>
</dbReference>
<dbReference type="InterPro" id="IPR029058">
    <property type="entry name" value="AB_hydrolase_fold"/>
</dbReference>
<dbReference type="InterPro" id="IPR010126">
    <property type="entry name" value="Esterase_phb"/>
</dbReference>
<dbReference type="InterPro" id="IPR003961">
    <property type="entry name" value="FN3_dom"/>
</dbReference>
<dbReference type="InterPro" id="IPR036116">
    <property type="entry name" value="FN3_sf"/>
</dbReference>
<dbReference type="InterPro" id="IPR013783">
    <property type="entry name" value="Ig-like_fold"/>
</dbReference>
<dbReference type="InterPro" id="IPR050955">
    <property type="entry name" value="Plant_Biomass_Hydrol_Est"/>
</dbReference>
<dbReference type="NCBIfam" id="TIGR01840">
    <property type="entry name" value="esterase_phb"/>
    <property type="match status" value="1"/>
</dbReference>
<dbReference type="PANTHER" id="PTHR43037:SF1">
    <property type="entry name" value="BLL1128 PROTEIN"/>
    <property type="match status" value="1"/>
</dbReference>
<dbReference type="PANTHER" id="PTHR43037">
    <property type="entry name" value="UNNAMED PRODUCT-RELATED"/>
    <property type="match status" value="1"/>
</dbReference>
<dbReference type="Pfam" id="PF10503">
    <property type="entry name" value="Esterase_PHB"/>
    <property type="match status" value="1"/>
</dbReference>
<dbReference type="Pfam" id="PF00041">
    <property type="entry name" value="fn3"/>
    <property type="match status" value="1"/>
</dbReference>
<dbReference type="SMART" id="SM00060">
    <property type="entry name" value="FN3"/>
    <property type="match status" value="1"/>
</dbReference>
<dbReference type="SUPFAM" id="SSF53474">
    <property type="entry name" value="alpha/beta-Hydrolases"/>
    <property type="match status" value="2"/>
</dbReference>
<dbReference type="SUPFAM" id="SSF49265">
    <property type="entry name" value="Fibronectin type III"/>
    <property type="match status" value="1"/>
</dbReference>
<dbReference type="PROSITE" id="PS50853">
    <property type="entry name" value="FN3"/>
    <property type="match status" value="1"/>
</dbReference>
<name>PHB_RALPI</name>
<comment type="function">
    <text>This protein degrades water-insoluble and water-soluble PHB to monomeric D(-)-3-hydroxybutyrate.</text>
</comment>
<comment type="catalytic activity">
    <reaction>
        <text>[(3R)-hydroxybutanoate](n) + H2O = [(3R)-hydroxybutanoate](n-2) + (3R)-hydroxybutanoate dimer + H(+)</text>
        <dbReference type="Rhea" id="RHEA:56392"/>
        <dbReference type="Rhea" id="RHEA-COMP:14464"/>
        <dbReference type="Rhea" id="RHEA-COMP:14519"/>
        <dbReference type="ChEBI" id="CHEBI:8298"/>
        <dbReference type="ChEBI" id="CHEBI:10979"/>
        <dbReference type="ChEBI" id="CHEBI:15377"/>
        <dbReference type="ChEBI" id="CHEBI:15378"/>
        <dbReference type="EC" id="3.1.1.75"/>
    </reaction>
</comment>
<comment type="catalytic activity">
    <reaction>
        <text>[(3R)-hydroxybutanoate](n) + H2O = [(3R)-hydroxybutanoate](n-3) + (3R)-hydroxybutanoate trimer + H(+)</text>
        <dbReference type="Rhea" id="RHEA:56396"/>
        <dbReference type="Rhea" id="RHEA-COMP:14464"/>
        <dbReference type="Rhea" id="RHEA-COMP:14520"/>
        <dbReference type="ChEBI" id="CHEBI:8298"/>
        <dbReference type="ChEBI" id="CHEBI:15377"/>
        <dbReference type="ChEBI" id="CHEBI:15378"/>
        <dbReference type="ChEBI" id="CHEBI:140385"/>
        <dbReference type="EC" id="3.1.1.75"/>
    </reaction>
</comment>
<comment type="catalytic activity">
    <reaction>
        <text>[(3R)-hydroxybutanoate](n) + H2O = [(3R)-hydroxybutanoate](n-1) + (R)-3-hydroxybutanoate + H(+)</text>
        <dbReference type="Rhea" id="RHEA:11248"/>
        <dbReference type="Rhea" id="RHEA-COMP:14464"/>
        <dbReference type="Rhea" id="RHEA-COMP:14518"/>
        <dbReference type="ChEBI" id="CHEBI:8298"/>
        <dbReference type="ChEBI" id="CHEBI:10983"/>
        <dbReference type="ChEBI" id="CHEBI:15377"/>
        <dbReference type="ChEBI" id="CHEBI:15378"/>
        <dbReference type="EC" id="3.1.1.75"/>
    </reaction>
</comment>
<comment type="catalytic activity">
    <reaction>
        <text>[(3R)-hydroxybutanoate](n) + H2O = [(3R)-hydroxybutanoate](n-5) + (3R)-hydroxybutanoate pentamer + H(+)</text>
        <dbReference type="Rhea" id="RHEA:56404"/>
        <dbReference type="Rhea" id="RHEA-COMP:14464"/>
        <dbReference type="Rhea" id="RHEA-COMP:14522"/>
        <dbReference type="ChEBI" id="CHEBI:8298"/>
        <dbReference type="ChEBI" id="CHEBI:15377"/>
        <dbReference type="ChEBI" id="CHEBI:15378"/>
        <dbReference type="ChEBI" id="CHEBI:140383"/>
        <dbReference type="EC" id="3.1.1.75"/>
    </reaction>
</comment>
<comment type="catalytic activity">
    <reaction>
        <text>[(3R)-hydroxybutanoate](n) + H2O = [(3R)-hydroxybutanoate](n-4) + (3R)-hydroxybutanoate tetramer + H(+)</text>
        <dbReference type="Rhea" id="RHEA:56400"/>
        <dbReference type="Rhea" id="RHEA-COMP:14464"/>
        <dbReference type="Rhea" id="RHEA-COMP:14521"/>
        <dbReference type="ChEBI" id="CHEBI:8298"/>
        <dbReference type="ChEBI" id="CHEBI:15377"/>
        <dbReference type="ChEBI" id="CHEBI:15378"/>
        <dbReference type="ChEBI" id="CHEBI:140384"/>
        <dbReference type="EC" id="3.1.1.75"/>
    </reaction>
</comment>
<comment type="subcellular location">
    <subcellularLocation>
        <location>Secreted</location>
    </subcellularLocation>
</comment>
<comment type="similarity">
    <text evidence="3">Belongs to the AB hydrolase superfamily. Lipase family.</text>
</comment>
<organism>
    <name type="scientific">Ralstonia pickettii</name>
    <name type="common">Burkholderia pickettii</name>
    <dbReference type="NCBI Taxonomy" id="329"/>
    <lineage>
        <taxon>Bacteria</taxon>
        <taxon>Pseudomonadati</taxon>
        <taxon>Pseudomonadota</taxon>
        <taxon>Betaproteobacteria</taxon>
        <taxon>Burkholderiales</taxon>
        <taxon>Burkholderiaceae</taxon>
        <taxon>Ralstonia</taxon>
    </lineage>
</organism>
<evidence type="ECO:0000250" key="1"/>
<evidence type="ECO:0000255" key="2">
    <source>
        <dbReference type="PROSITE-ProRule" id="PRU00316"/>
    </source>
</evidence>
<evidence type="ECO:0000305" key="3"/>
<protein>
    <recommendedName>
        <fullName>Poly(3-hydroxybutyrate) depolymerase</fullName>
        <shortName>PHB depolymerase</shortName>
        <ecNumber>3.1.1.75</ecNumber>
    </recommendedName>
</protein>
<feature type="signal peptide">
    <location>
        <begin position="1"/>
        <end position="27"/>
    </location>
</feature>
<feature type="chain" id="PRO_0000017727" description="Poly(3-hydroxybutyrate) depolymerase">
    <location>
        <begin position="28"/>
        <end position="488"/>
    </location>
</feature>
<feature type="domain" description="Fibronectin type-III" evidence="2">
    <location>
        <begin position="346"/>
        <end position="428"/>
    </location>
</feature>
<feature type="active site" description="Charge relay system" evidence="1">
    <location>
        <position position="166"/>
    </location>
</feature>
<proteinExistence type="inferred from homology"/>
<reference key="1">
    <citation type="journal article" date="1989" name="J. Bacteriol.">
        <title>Cloning, nucleotide sequence, and expression in Escherichia coli of the gene for poly(3-hydroxybutyrate) depolymerase from Alcaligenes faecalis.</title>
        <authorList>
            <person name="Saito T."/>
            <person name="Suzuki K."/>
            <person name="Yamamoto J."/>
            <person name="Fukui T."/>
            <person name="Miwa K."/>
            <person name="Tomita K."/>
            <person name="Nakanishi S."/>
            <person name="Odani S."/>
            <person name="Suzuki J."/>
            <person name="Ishikawa K."/>
        </authorList>
    </citation>
    <scope>NUCLEOTIDE SEQUENCE [GENOMIC DNA]</scope>
    <source>
        <strain>T1</strain>
    </source>
</reference>
<reference key="2">
    <citation type="journal article" date="1992" name="Proc. Natl. Acad. Sci. U.S.A.">
        <title>Proposed acquisition of an animal protein domain by bacteria.</title>
        <authorList>
            <person name="Bork P."/>
            <person name="Doolittle R.F."/>
        </authorList>
    </citation>
    <scope>DOMAIN FIBRONECTIN TYPE-III</scope>
</reference>
<accession>P12625</accession>
<sequence length="488" mass="49935">MVRRLWRRIAGWLAACVAILCAFPLHAATAGPGAWSSQQTWAADSVNGGNLTGYFYWPASQPTTPNGKRALVLVLHGCVQTASGDVIDNANGAGFNWKSVADQYGAVILAPNATGNVYSNHCWDYANASPSRTAGHVGVLLDLVNRFVTNSQYAIDPNQVYVAGLSSGGGMTMVLGCIAPDIFAGIGINAGPPPGTTTAQIGYVPSGFTATTAANKCNAWAGSNAGKFSTQIAGAVWGTSDYTVAQAYGPMDAAAMRLVYGGNFTQGSQVSISGGGTNTPYTDSNGKVRTHEISVSGMAHAWPAGTGGDNTNYVDATHINYPVFVMDYWVKNNLRAGSGTGQAGSAPTGLAVTATTSTSVSLSWNAVANASSYGVYRNGSKVGSATATAYTDSGLIAGTTYSYTVTAVDPTAGESQPSAAVSATTKSAFTCTATTASNYAHVQAGRAHDSGGIAYANGSNQSMGLDNLFYTSTLAQTAAGYYIVGNCP</sequence>